<dbReference type="EC" id="2.4.2.18" evidence="1"/>
<dbReference type="EMBL" id="BA000017">
    <property type="protein sequence ID" value="BAB57531.1"/>
    <property type="molecule type" value="Genomic_DNA"/>
</dbReference>
<dbReference type="RefSeq" id="WP_000173833.1">
    <property type="nucleotide sequence ID" value="NC_002758.2"/>
</dbReference>
<dbReference type="SMR" id="P66996"/>
<dbReference type="KEGG" id="sav:SAV1369"/>
<dbReference type="HOGENOM" id="CLU_034315_3_0_9"/>
<dbReference type="PhylomeDB" id="P66996"/>
<dbReference type="UniPathway" id="UPA00035">
    <property type="reaction ID" value="UER00041"/>
</dbReference>
<dbReference type="Proteomes" id="UP000002481">
    <property type="component" value="Chromosome"/>
</dbReference>
<dbReference type="GO" id="GO:0005829">
    <property type="term" value="C:cytosol"/>
    <property type="evidence" value="ECO:0007669"/>
    <property type="project" value="TreeGrafter"/>
</dbReference>
<dbReference type="GO" id="GO:0004048">
    <property type="term" value="F:anthranilate phosphoribosyltransferase activity"/>
    <property type="evidence" value="ECO:0007669"/>
    <property type="project" value="UniProtKB-UniRule"/>
</dbReference>
<dbReference type="GO" id="GO:0000287">
    <property type="term" value="F:magnesium ion binding"/>
    <property type="evidence" value="ECO:0007669"/>
    <property type="project" value="UniProtKB-UniRule"/>
</dbReference>
<dbReference type="GO" id="GO:0000162">
    <property type="term" value="P:L-tryptophan biosynthetic process"/>
    <property type="evidence" value="ECO:0007669"/>
    <property type="project" value="UniProtKB-UniRule"/>
</dbReference>
<dbReference type="FunFam" id="3.40.1030.10:FF:000009">
    <property type="entry name" value="Anthranilate phosphoribosyltransferase"/>
    <property type="match status" value="1"/>
</dbReference>
<dbReference type="Gene3D" id="3.40.1030.10">
    <property type="entry name" value="Nucleoside phosphorylase/phosphoribosyltransferase catalytic domain"/>
    <property type="match status" value="1"/>
</dbReference>
<dbReference type="HAMAP" id="MF_00211">
    <property type="entry name" value="TrpD"/>
    <property type="match status" value="1"/>
</dbReference>
<dbReference type="InterPro" id="IPR005940">
    <property type="entry name" value="Anthranilate_Pribosyl_Tfrase"/>
</dbReference>
<dbReference type="InterPro" id="IPR000312">
    <property type="entry name" value="Glycosyl_Trfase_fam3"/>
</dbReference>
<dbReference type="InterPro" id="IPR035902">
    <property type="entry name" value="Nuc_phospho_transferase"/>
</dbReference>
<dbReference type="NCBIfam" id="TIGR01245">
    <property type="entry name" value="trpD"/>
    <property type="match status" value="1"/>
</dbReference>
<dbReference type="PANTHER" id="PTHR43285">
    <property type="entry name" value="ANTHRANILATE PHOSPHORIBOSYLTRANSFERASE"/>
    <property type="match status" value="1"/>
</dbReference>
<dbReference type="PANTHER" id="PTHR43285:SF2">
    <property type="entry name" value="ANTHRANILATE PHOSPHORIBOSYLTRANSFERASE"/>
    <property type="match status" value="1"/>
</dbReference>
<dbReference type="Pfam" id="PF00591">
    <property type="entry name" value="Glycos_transf_3"/>
    <property type="match status" value="1"/>
</dbReference>
<dbReference type="SUPFAM" id="SSF52418">
    <property type="entry name" value="Nucleoside phosphorylase/phosphoribosyltransferase catalytic domain"/>
    <property type="match status" value="1"/>
</dbReference>
<evidence type="ECO:0000255" key="1">
    <source>
        <dbReference type="HAMAP-Rule" id="MF_00211"/>
    </source>
</evidence>
<feature type="chain" id="PRO_0000154480" description="Anthranilate phosphoribosyltransferase">
    <location>
        <begin position="1"/>
        <end position="332"/>
    </location>
</feature>
<feature type="binding site" evidence="1">
    <location>
        <position position="78"/>
    </location>
    <ligand>
        <name>5-phospho-alpha-D-ribose 1-diphosphate</name>
        <dbReference type="ChEBI" id="CHEBI:58017"/>
    </ligand>
</feature>
<feature type="binding site" evidence="1">
    <location>
        <position position="78"/>
    </location>
    <ligand>
        <name>anthranilate</name>
        <dbReference type="ChEBI" id="CHEBI:16567"/>
        <label>1</label>
    </ligand>
</feature>
<feature type="binding site" evidence="1">
    <location>
        <begin position="81"/>
        <end position="82"/>
    </location>
    <ligand>
        <name>5-phospho-alpha-D-ribose 1-diphosphate</name>
        <dbReference type="ChEBI" id="CHEBI:58017"/>
    </ligand>
</feature>
<feature type="binding site" evidence="1">
    <location>
        <position position="86"/>
    </location>
    <ligand>
        <name>5-phospho-alpha-D-ribose 1-diphosphate</name>
        <dbReference type="ChEBI" id="CHEBI:58017"/>
    </ligand>
</feature>
<feature type="binding site" evidence="1">
    <location>
        <begin position="88"/>
        <end position="91"/>
    </location>
    <ligand>
        <name>5-phospho-alpha-D-ribose 1-diphosphate</name>
        <dbReference type="ChEBI" id="CHEBI:58017"/>
    </ligand>
</feature>
<feature type="binding site" evidence="1">
    <location>
        <position position="90"/>
    </location>
    <ligand>
        <name>Mg(2+)</name>
        <dbReference type="ChEBI" id="CHEBI:18420"/>
        <label>1</label>
    </ligand>
</feature>
<feature type="binding site" evidence="1">
    <location>
        <begin position="106"/>
        <end position="114"/>
    </location>
    <ligand>
        <name>5-phospho-alpha-D-ribose 1-diphosphate</name>
        <dbReference type="ChEBI" id="CHEBI:58017"/>
    </ligand>
</feature>
<feature type="binding site" evidence="1">
    <location>
        <position position="109"/>
    </location>
    <ligand>
        <name>anthranilate</name>
        <dbReference type="ChEBI" id="CHEBI:16567"/>
        <label>1</label>
    </ligand>
</feature>
<feature type="binding site" evidence="1">
    <location>
        <position position="118"/>
    </location>
    <ligand>
        <name>5-phospho-alpha-D-ribose 1-diphosphate</name>
        <dbReference type="ChEBI" id="CHEBI:58017"/>
    </ligand>
</feature>
<feature type="binding site" evidence="1">
    <location>
        <position position="163"/>
    </location>
    <ligand>
        <name>anthranilate</name>
        <dbReference type="ChEBI" id="CHEBI:16567"/>
        <label>2</label>
    </ligand>
</feature>
<feature type="binding site" evidence="1">
    <location>
        <position position="222"/>
    </location>
    <ligand>
        <name>Mg(2+)</name>
        <dbReference type="ChEBI" id="CHEBI:18420"/>
        <label>2</label>
    </ligand>
</feature>
<feature type="binding site" evidence="1">
    <location>
        <position position="223"/>
    </location>
    <ligand>
        <name>Mg(2+)</name>
        <dbReference type="ChEBI" id="CHEBI:18420"/>
        <label>1</label>
    </ligand>
</feature>
<feature type="binding site" evidence="1">
    <location>
        <position position="223"/>
    </location>
    <ligand>
        <name>Mg(2+)</name>
        <dbReference type="ChEBI" id="CHEBI:18420"/>
        <label>2</label>
    </ligand>
</feature>
<organism>
    <name type="scientific">Staphylococcus aureus (strain Mu50 / ATCC 700699)</name>
    <dbReference type="NCBI Taxonomy" id="158878"/>
    <lineage>
        <taxon>Bacteria</taxon>
        <taxon>Bacillati</taxon>
        <taxon>Bacillota</taxon>
        <taxon>Bacilli</taxon>
        <taxon>Bacillales</taxon>
        <taxon>Staphylococcaceae</taxon>
        <taxon>Staphylococcus</taxon>
    </lineage>
</organism>
<gene>
    <name evidence="1" type="primary">trpD</name>
    <name type="ordered locus">SAV1369</name>
</gene>
<sequence length="332" mass="36526">MTLLTRIKTETILLESDIKELIDILISPSIGTDIKYELLSSYSEREIQQQELTYIVRSLINTMYPHQPCYEGAMCVCGTGGDKSNSFNISTTVAFVVASAGVKVIKHGNKSITSNSGSTDLLNQMNIQTTTVDDTPNQLNEKDLVFIGATESYPIMKYMQPVRKMIGKPTILNLVGPLINPYHLTYQMVGVFDPTKLKLVAKTIKDLGRKRAIVLHGANGMDEATLSGDNLIYELTEDGEIKNYTLNATDYGLKHAPNSDFKGGSPEENLAISLNILNGKDQSSRRDVVLLNAGLSLYVAEKVDTIAEGIELATTLIDNGEALKKYHQMRGE</sequence>
<keyword id="KW-0028">Amino-acid biosynthesis</keyword>
<keyword id="KW-0057">Aromatic amino acid biosynthesis</keyword>
<keyword id="KW-0328">Glycosyltransferase</keyword>
<keyword id="KW-0460">Magnesium</keyword>
<keyword id="KW-0479">Metal-binding</keyword>
<keyword id="KW-0808">Transferase</keyword>
<keyword id="KW-0822">Tryptophan biosynthesis</keyword>
<accession>P66996</accession>
<accession>Q99UB2</accession>
<name>TRPD_STAAM</name>
<proteinExistence type="inferred from homology"/>
<reference key="1">
    <citation type="journal article" date="2001" name="Lancet">
        <title>Whole genome sequencing of meticillin-resistant Staphylococcus aureus.</title>
        <authorList>
            <person name="Kuroda M."/>
            <person name="Ohta T."/>
            <person name="Uchiyama I."/>
            <person name="Baba T."/>
            <person name="Yuzawa H."/>
            <person name="Kobayashi I."/>
            <person name="Cui L."/>
            <person name="Oguchi A."/>
            <person name="Aoki K."/>
            <person name="Nagai Y."/>
            <person name="Lian J.-Q."/>
            <person name="Ito T."/>
            <person name="Kanamori M."/>
            <person name="Matsumaru H."/>
            <person name="Maruyama A."/>
            <person name="Murakami H."/>
            <person name="Hosoyama A."/>
            <person name="Mizutani-Ui Y."/>
            <person name="Takahashi N.K."/>
            <person name="Sawano T."/>
            <person name="Inoue R."/>
            <person name="Kaito C."/>
            <person name="Sekimizu K."/>
            <person name="Hirakawa H."/>
            <person name="Kuhara S."/>
            <person name="Goto S."/>
            <person name="Yabuzaki J."/>
            <person name="Kanehisa M."/>
            <person name="Yamashita A."/>
            <person name="Oshima K."/>
            <person name="Furuya K."/>
            <person name="Yoshino C."/>
            <person name="Shiba T."/>
            <person name="Hattori M."/>
            <person name="Ogasawara N."/>
            <person name="Hayashi H."/>
            <person name="Hiramatsu K."/>
        </authorList>
    </citation>
    <scope>NUCLEOTIDE SEQUENCE [LARGE SCALE GENOMIC DNA]</scope>
    <source>
        <strain>Mu50 / ATCC 700699</strain>
    </source>
</reference>
<protein>
    <recommendedName>
        <fullName evidence="1">Anthranilate phosphoribosyltransferase</fullName>
        <ecNumber evidence="1">2.4.2.18</ecNumber>
    </recommendedName>
</protein>
<comment type="function">
    <text evidence="1">Catalyzes the transfer of the phosphoribosyl group of 5-phosphorylribose-1-pyrophosphate (PRPP) to anthranilate to yield N-(5'-phosphoribosyl)-anthranilate (PRA).</text>
</comment>
<comment type="catalytic activity">
    <reaction evidence="1">
        <text>N-(5-phospho-beta-D-ribosyl)anthranilate + diphosphate = 5-phospho-alpha-D-ribose 1-diphosphate + anthranilate</text>
        <dbReference type="Rhea" id="RHEA:11768"/>
        <dbReference type="ChEBI" id="CHEBI:16567"/>
        <dbReference type="ChEBI" id="CHEBI:18277"/>
        <dbReference type="ChEBI" id="CHEBI:33019"/>
        <dbReference type="ChEBI" id="CHEBI:58017"/>
        <dbReference type="EC" id="2.4.2.18"/>
    </reaction>
</comment>
<comment type="cofactor">
    <cofactor evidence="1">
        <name>Mg(2+)</name>
        <dbReference type="ChEBI" id="CHEBI:18420"/>
    </cofactor>
    <text evidence="1">Binds 2 magnesium ions per monomer.</text>
</comment>
<comment type="pathway">
    <text evidence="1">Amino-acid biosynthesis; L-tryptophan biosynthesis; L-tryptophan from chorismate: step 2/5.</text>
</comment>
<comment type="subunit">
    <text evidence="1">Homodimer.</text>
</comment>
<comment type="similarity">
    <text evidence="1">Belongs to the anthranilate phosphoribosyltransferase family.</text>
</comment>